<evidence type="ECO:0000255" key="1">
    <source>
        <dbReference type="HAMAP-Rule" id="MF_01581"/>
    </source>
</evidence>
<reference key="1">
    <citation type="journal article" date="2005" name="Nucleic Acids Res.">
        <title>The genome sequence of Salmonella enterica serovar Choleraesuis, a highly invasive and resistant zoonotic pathogen.</title>
        <authorList>
            <person name="Chiu C.-H."/>
            <person name="Tang P."/>
            <person name="Chu C."/>
            <person name="Hu S."/>
            <person name="Bao Q."/>
            <person name="Yu J."/>
            <person name="Chou Y.-Y."/>
            <person name="Wang H.-S."/>
            <person name="Lee Y.-S."/>
        </authorList>
    </citation>
    <scope>NUCLEOTIDE SEQUENCE [LARGE SCALE GENOMIC DNA]</scope>
    <source>
        <strain>SC-B67</strain>
    </source>
</reference>
<feature type="signal peptide" evidence="1">
    <location>
        <begin position="1"/>
        <end position="28"/>
    </location>
</feature>
<feature type="chain" id="PRO_0000300226" description="UPF0482 protein YnfB">
    <location>
        <begin position="29"/>
        <end position="113"/>
    </location>
</feature>
<proteinExistence type="inferred from homology"/>
<comment type="similarity">
    <text evidence="1">Belongs to the UPF0482 family.</text>
</comment>
<organism>
    <name type="scientific">Salmonella choleraesuis (strain SC-B67)</name>
    <dbReference type="NCBI Taxonomy" id="321314"/>
    <lineage>
        <taxon>Bacteria</taxon>
        <taxon>Pseudomonadati</taxon>
        <taxon>Pseudomonadota</taxon>
        <taxon>Gammaproteobacteria</taxon>
        <taxon>Enterobacterales</taxon>
        <taxon>Enterobacteriaceae</taxon>
        <taxon>Salmonella</taxon>
    </lineage>
</organism>
<name>YNFB_SALCH</name>
<gene>
    <name evidence="1" type="primary">ynfB</name>
    <name type="ordered locus">SCH_1520</name>
</gene>
<protein>
    <recommendedName>
        <fullName evidence="1">UPF0482 protein YnfB</fullName>
    </recommendedName>
</protein>
<keyword id="KW-0732">Signal</keyword>
<dbReference type="EMBL" id="AE017220">
    <property type="protein sequence ID" value="AAX65426.1"/>
    <property type="molecule type" value="Genomic_DNA"/>
</dbReference>
<dbReference type="RefSeq" id="WP_001066440.1">
    <property type="nucleotide sequence ID" value="NC_006905.1"/>
</dbReference>
<dbReference type="KEGG" id="sec:SCH_1520"/>
<dbReference type="HOGENOM" id="CLU_167574_0_0_6"/>
<dbReference type="Proteomes" id="UP000000538">
    <property type="component" value="Chromosome"/>
</dbReference>
<dbReference type="HAMAP" id="MF_01581">
    <property type="entry name" value="UPF0482"/>
    <property type="match status" value="1"/>
</dbReference>
<dbReference type="InterPro" id="IPR009700">
    <property type="entry name" value="DUF1283"/>
</dbReference>
<dbReference type="NCBIfam" id="NF010180">
    <property type="entry name" value="PRK13659.1"/>
    <property type="match status" value="1"/>
</dbReference>
<dbReference type="Pfam" id="PF06932">
    <property type="entry name" value="DUF1283"/>
    <property type="match status" value="1"/>
</dbReference>
<accession>Q57PD5</accession>
<sequence length="113" mass="12846">MNNTLSKRLCLTAMLTLAAVVYTTSAFAETSKLVIESGDSAQSRQEAAMEKEQWNDTRSLRQKVNTRAEKEWDKADAAFDNRDKCEQSANINAYWEPNTLRCLDRRTGRVITP</sequence>